<reference key="1">
    <citation type="journal article" date="2010" name="Mol. Phylogenet. Evol.">
        <title>Evolution of Conus peptide toxins: analysis of Conus californicus Reeve, 1844.</title>
        <authorList>
            <person name="Biggs J.S."/>
            <person name="Watkins M."/>
            <person name="Puillandre N."/>
            <person name="Ownby J.P."/>
            <person name="Lopez-Vera E."/>
            <person name="Christensen S."/>
            <person name="Moreno K.J."/>
            <person name="Bernaldez J."/>
            <person name="Licea-Navarro A."/>
            <person name="Corneli P.S."/>
            <person name="Olivera B.M."/>
        </authorList>
    </citation>
    <scope>NUCLEOTIDE SEQUENCE [GENOMIC DNA]</scope>
</reference>
<reference key="2">
    <citation type="journal article" date="1998" name="Science">
        <title>Inactivation of a serotonin-gated ion channel by a polypeptide toxin from marine snails.</title>
        <authorList>
            <person name="England L.J."/>
            <person name="Imperial J.S."/>
            <person name="Jacobsen R.B."/>
            <person name="Craig A.G."/>
            <person name="Gulyas J."/>
            <person name="Akhtar M."/>
            <person name="Rivier J.E."/>
            <person name="Julius D."/>
            <person name="Olivera B.M."/>
        </authorList>
    </citation>
    <scope>NUCLEOTIDE SEQUENCE [MRNA]</scope>
    <scope>PROTEIN SEQUENCE OF 47-87</scope>
    <scope>HYDROXYLATION AT PRO-55</scope>
    <scope>BROMINATION AT TRP-80</scope>
    <scope>AMIDATION AT SER-87</scope>
    <scope>SYNTHESIS OF 73-88</scope>
    <scope>FUNCTION</scope>
    <scope>MASS SPECTROMETRY</scope>
    <scope>SUBCELLULAR LOCATION</scope>
    <source>
        <tissue>Venom</tissue>
    </source>
</reference>
<reference key="3">
    <citation type="journal article" date="1998" name="Science">
        <authorList>
            <person name="England L.J."/>
            <person name="Imperial J.S."/>
            <person name="Jacobsen R.B."/>
            <person name="Craig A.G."/>
            <person name="Gulyas J."/>
            <person name="Akhtar M."/>
            <person name="Rivier J.E."/>
            <person name="Julius D."/>
            <person name="Olivera B.M."/>
        </authorList>
    </citation>
    <scope>ERRATUM OF PUBMED:9677203</scope>
</reference>
<reference key="4">
    <citation type="journal article" date="2015" name="Biochem. Pharmacol.">
        <title>alphaS-conotoxin GVIIIB potently and selectively blocks alpha9alpha10 nicotinic acetylcholine receptors.</title>
        <authorList>
            <person name="Christensen S.B."/>
            <person name="Bandyopadhyay P.K."/>
            <person name="Olivera B.M."/>
            <person name="McIntosh J.M."/>
        </authorList>
    </citation>
    <scope>FUNCTION</scope>
</reference>
<comment type="function">
    <text evidence="2 3">Sigma-conotoxins bind and inhibit serotonin-gated ion channels. This peptide selectively and reversibly inhibits 5-hydroxytryptamine 3 receptor (HTR3A) through competitive antagonism (IC(50)=53-86.8 nM).</text>
</comment>
<comment type="subcellular location">
    <subcellularLocation>
        <location evidence="2">Secreted</location>
    </subcellularLocation>
</comment>
<comment type="tissue specificity">
    <text evidence="6">Expressed by the venom duct.</text>
</comment>
<comment type="domain">
    <text evidence="5">The cysteine framework is VIII (C-C-C-C-C-C-C-C-C-C).</text>
</comment>
<comment type="PTM">
    <text evidence="2">Contains 5 disulfide bonds.</text>
</comment>
<comment type="mass spectrometry" mass="4187.6" method="Electrospray" evidence="2">
    <text>Monoisotopic mass.</text>
</comment>
<comment type="similarity">
    <text evidence="5">Belongs to the conotoxin S superfamily.</text>
</comment>
<accession>P58924</accession>
<accession>D6C4G8</accession>
<keyword id="KW-0027">Amidation</keyword>
<keyword id="KW-0102">Bromination</keyword>
<keyword id="KW-0903">Direct protein sequencing</keyword>
<keyword id="KW-1015">Disulfide bond</keyword>
<keyword id="KW-0379">Hydroxylation</keyword>
<keyword id="KW-0872">Ion channel impairing toxin</keyword>
<keyword id="KW-0528">Neurotoxin</keyword>
<keyword id="KW-0964">Secreted</keyword>
<keyword id="KW-0732">Signal</keyword>
<keyword id="KW-0800">Toxin</keyword>
<proteinExistence type="evidence at protein level"/>
<dbReference type="EMBL" id="FJ959110">
    <property type="protein sequence ID" value="ADB93080.1"/>
    <property type="molecule type" value="Genomic_DNA"/>
</dbReference>
<dbReference type="PIR" id="A59149">
    <property type="entry name" value="A59149"/>
</dbReference>
<dbReference type="SMR" id="P58924"/>
<dbReference type="TCDB" id="8.B.34.1.1">
    <property type="family name" value="the sigma-conotoxin (sigma-conotoxin) family"/>
</dbReference>
<dbReference type="ConoServer" id="1724">
    <property type="toxin name" value="GVIIIA precursor"/>
</dbReference>
<dbReference type="GO" id="GO:0005576">
    <property type="term" value="C:extracellular region"/>
    <property type="evidence" value="ECO:0007669"/>
    <property type="project" value="UniProtKB-SubCell"/>
</dbReference>
<dbReference type="GO" id="GO:0099106">
    <property type="term" value="F:ion channel regulator activity"/>
    <property type="evidence" value="ECO:0007669"/>
    <property type="project" value="UniProtKB-KW"/>
</dbReference>
<dbReference type="GO" id="GO:0090729">
    <property type="term" value="F:toxin activity"/>
    <property type="evidence" value="ECO:0007669"/>
    <property type="project" value="UniProtKB-KW"/>
</dbReference>
<name>CS8A_CONGE</name>
<protein>
    <recommendedName>
        <fullName evidence="4">Sigma-conotoxin GVIIIA</fullName>
    </recommendedName>
</protein>
<evidence type="ECO:0000255" key="1"/>
<evidence type="ECO:0000269" key="2">
    <source>
    </source>
</evidence>
<evidence type="ECO:0000269" key="3">
    <source ref="3"/>
</evidence>
<evidence type="ECO:0000303" key="4">
    <source>
    </source>
</evidence>
<evidence type="ECO:0000305" key="5"/>
<evidence type="ECO:0000305" key="6">
    <source>
    </source>
</evidence>
<feature type="signal peptide" evidence="1">
    <location>
        <begin position="1"/>
        <end position="20"/>
    </location>
</feature>
<feature type="propeptide" id="PRO_0000420714" evidence="2">
    <location>
        <begin position="21"/>
        <end position="46"/>
    </location>
</feature>
<feature type="peptide" id="PRO_0000035015" description="Sigma-conotoxin GVIIIA" evidence="2">
    <location>
        <begin position="47"/>
        <end position="87"/>
    </location>
</feature>
<feature type="modified residue" description="4-hydroxyproline" evidence="2">
    <location>
        <position position="55"/>
    </location>
</feature>
<feature type="modified residue" description="6'-bromotryptophan" evidence="2">
    <location>
        <position position="80"/>
    </location>
</feature>
<feature type="modified residue" description="Serine amide" evidence="2">
    <location>
        <position position="87"/>
    </location>
</feature>
<sequence length="88" mass="9430">MMSKMGAMFVLLLLFTLASSLQEGDVQARKTRLKSDFYRALARDDRGCTRTCGGPKCTGTCTCTNSSKCGCRYNVHPSGWGCGCACSG</sequence>
<organism>
    <name type="scientific">Conus geographus</name>
    <name type="common">Geography cone</name>
    <name type="synonym">Nubecula geographus</name>
    <dbReference type="NCBI Taxonomy" id="6491"/>
    <lineage>
        <taxon>Eukaryota</taxon>
        <taxon>Metazoa</taxon>
        <taxon>Spiralia</taxon>
        <taxon>Lophotrochozoa</taxon>
        <taxon>Mollusca</taxon>
        <taxon>Gastropoda</taxon>
        <taxon>Caenogastropoda</taxon>
        <taxon>Neogastropoda</taxon>
        <taxon>Conoidea</taxon>
        <taxon>Conidae</taxon>
        <taxon>Conus</taxon>
        <taxon>Gastridium</taxon>
    </lineage>
</organism>